<gene>
    <name type="primary">bioC</name>
    <name type="ordered locus">CJA_0428</name>
</gene>
<reference key="1">
    <citation type="journal article" date="2008" name="J. Bacteriol.">
        <title>Insights into plant cell wall degradation from the genome sequence of the soil bacterium Cellvibrio japonicus.</title>
        <authorList>
            <person name="DeBoy R.T."/>
            <person name="Mongodin E.F."/>
            <person name="Fouts D.E."/>
            <person name="Tailford L.E."/>
            <person name="Khouri H."/>
            <person name="Emerson J.B."/>
            <person name="Mohamoud Y."/>
            <person name="Watkins K."/>
            <person name="Henrissat B."/>
            <person name="Gilbert H.J."/>
            <person name="Nelson K.E."/>
        </authorList>
    </citation>
    <scope>NUCLEOTIDE SEQUENCE [LARGE SCALE GENOMIC DNA]</scope>
    <source>
        <strain>Ueda107</strain>
    </source>
</reference>
<keyword id="KW-0093">Biotin biosynthesis</keyword>
<keyword id="KW-0378">Hydrolase</keyword>
<keyword id="KW-0489">Methyltransferase</keyword>
<keyword id="KW-0511">Multifunctional enzyme</keyword>
<keyword id="KW-1185">Reference proteome</keyword>
<keyword id="KW-0949">S-adenosyl-L-methionine</keyword>
<keyword id="KW-0808">Transferase</keyword>
<comment type="function">
    <text evidence="1">Converts the free carboxyl group of a malonyl-thioester to its methyl ester by transfer of a methyl group from S-adenosyl-L-methionine (SAM). It allows to synthesize pimeloyl-ACP via the fatty acid synthetic pathway (By similarity).</text>
</comment>
<comment type="function">
    <text evidence="1">The physiological role of BioH is to remove the methyl group introduced by BioC when the pimeloyl moiety is complete. It allows to synthesize pimeloyl-ACP via the fatty acid synthetic pathway through the hydrolysis of the ester bonds of pimeloyl-ACP esters (By similarity).</text>
</comment>
<comment type="catalytic activity">
    <reaction>
        <text>a carboxylic ester + H2O = an alcohol + a carboxylate + H(+)</text>
        <dbReference type="Rhea" id="RHEA:21164"/>
        <dbReference type="ChEBI" id="CHEBI:15377"/>
        <dbReference type="ChEBI" id="CHEBI:15378"/>
        <dbReference type="ChEBI" id="CHEBI:29067"/>
        <dbReference type="ChEBI" id="CHEBI:30879"/>
        <dbReference type="ChEBI" id="CHEBI:33308"/>
        <dbReference type="EC" id="3.1.1.1"/>
    </reaction>
</comment>
<comment type="catalytic activity">
    <reaction>
        <text>malonyl-[ACP] + S-adenosyl-L-methionine = malonyl-[ACP] methyl ester + S-adenosyl-L-homocysteine</text>
        <dbReference type="Rhea" id="RHEA:17105"/>
        <dbReference type="Rhea" id="RHEA-COMP:9623"/>
        <dbReference type="Rhea" id="RHEA-COMP:9954"/>
        <dbReference type="ChEBI" id="CHEBI:57856"/>
        <dbReference type="ChEBI" id="CHEBI:59789"/>
        <dbReference type="ChEBI" id="CHEBI:78449"/>
        <dbReference type="ChEBI" id="CHEBI:78845"/>
        <dbReference type="EC" id="2.1.1.197"/>
    </reaction>
</comment>
<comment type="pathway">
    <text>Cofactor biosynthesis; biotin biosynthesis.</text>
</comment>
<comment type="similarity">
    <text evidence="2">In the N-terminal section; belongs to the AB hydrolase superfamily. Carboxylesterase BioH family.</text>
</comment>
<comment type="similarity">
    <text evidence="2">In the C-terminal section; belongs to the methyltransferase superfamily.</text>
</comment>
<dbReference type="EC" id="3.1.1.1"/>
<dbReference type="EC" id="2.1.1.197"/>
<dbReference type="EMBL" id="CP000934">
    <property type="protein sequence ID" value="ACE82969.1"/>
    <property type="molecule type" value="Genomic_DNA"/>
</dbReference>
<dbReference type="RefSeq" id="WP_012486110.1">
    <property type="nucleotide sequence ID" value="NC_010995.1"/>
</dbReference>
<dbReference type="SMR" id="B3PI89"/>
<dbReference type="STRING" id="498211.CJA_0428"/>
<dbReference type="ESTHER" id="celju-b3pi89">
    <property type="family name" value="BioH"/>
</dbReference>
<dbReference type="KEGG" id="cja:CJA_0428"/>
<dbReference type="eggNOG" id="COG1073">
    <property type="taxonomic scope" value="Bacteria"/>
</dbReference>
<dbReference type="eggNOG" id="COG2226">
    <property type="taxonomic scope" value="Bacteria"/>
</dbReference>
<dbReference type="HOGENOM" id="CLU_550729_0_0_6"/>
<dbReference type="OrthoDB" id="9760689at2"/>
<dbReference type="UniPathway" id="UPA00078"/>
<dbReference type="Proteomes" id="UP000001036">
    <property type="component" value="Chromosome"/>
</dbReference>
<dbReference type="GO" id="GO:0016020">
    <property type="term" value="C:membrane"/>
    <property type="evidence" value="ECO:0007669"/>
    <property type="project" value="TreeGrafter"/>
</dbReference>
<dbReference type="GO" id="GO:0010340">
    <property type="term" value="F:carboxyl-O-methyltransferase activity"/>
    <property type="evidence" value="ECO:0007669"/>
    <property type="project" value="UniProtKB-UniRule"/>
</dbReference>
<dbReference type="GO" id="GO:0106435">
    <property type="term" value="F:carboxylesterase activity"/>
    <property type="evidence" value="ECO:0007669"/>
    <property type="project" value="UniProtKB-EC"/>
</dbReference>
<dbReference type="GO" id="GO:0052689">
    <property type="term" value="F:carboxylic ester hydrolase activity"/>
    <property type="evidence" value="ECO:0000250"/>
    <property type="project" value="UniProtKB"/>
</dbReference>
<dbReference type="GO" id="GO:0004141">
    <property type="term" value="F:dethiobiotin synthase activity"/>
    <property type="evidence" value="ECO:0000250"/>
    <property type="project" value="UniProtKB"/>
</dbReference>
<dbReference type="GO" id="GO:0102130">
    <property type="term" value="F:malonyl-CoA methyltransferase activity"/>
    <property type="evidence" value="ECO:0007669"/>
    <property type="project" value="UniProtKB-EC"/>
</dbReference>
<dbReference type="GO" id="GO:0008757">
    <property type="term" value="F:S-adenosylmethionine-dependent methyltransferase activity"/>
    <property type="evidence" value="ECO:0007669"/>
    <property type="project" value="InterPro"/>
</dbReference>
<dbReference type="GO" id="GO:0009102">
    <property type="term" value="P:biotin biosynthetic process"/>
    <property type="evidence" value="ECO:0000250"/>
    <property type="project" value="UniProtKB"/>
</dbReference>
<dbReference type="GO" id="GO:0032259">
    <property type="term" value="P:methylation"/>
    <property type="evidence" value="ECO:0007669"/>
    <property type="project" value="UniProtKB-KW"/>
</dbReference>
<dbReference type="CDD" id="cd02440">
    <property type="entry name" value="AdoMet_MTases"/>
    <property type="match status" value="1"/>
</dbReference>
<dbReference type="Gene3D" id="3.40.50.1820">
    <property type="entry name" value="alpha/beta hydrolase"/>
    <property type="match status" value="1"/>
</dbReference>
<dbReference type="Gene3D" id="3.40.50.150">
    <property type="entry name" value="Vaccinia Virus protein VP39"/>
    <property type="match status" value="1"/>
</dbReference>
<dbReference type="HAMAP" id="MF_00835">
    <property type="entry name" value="BioC"/>
    <property type="match status" value="1"/>
</dbReference>
<dbReference type="InterPro" id="IPR000073">
    <property type="entry name" value="AB_hydrolase_1"/>
</dbReference>
<dbReference type="InterPro" id="IPR029058">
    <property type="entry name" value="AB_hydrolase_fold"/>
</dbReference>
<dbReference type="InterPro" id="IPR050266">
    <property type="entry name" value="AB_hydrolase_sf"/>
</dbReference>
<dbReference type="InterPro" id="IPR011814">
    <property type="entry name" value="BioC"/>
</dbReference>
<dbReference type="InterPro" id="IPR013216">
    <property type="entry name" value="Methyltransf_11"/>
</dbReference>
<dbReference type="InterPro" id="IPR029063">
    <property type="entry name" value="SAM-dependent_MTases_sf"/>
</dbReference>
<dbReference type="NCBIfam" id="TIGR02072">
    <property type="entry name" value="BioC"/>
    <property type="match status" value="1"/>
</dbReference>
<dbReference type="PANTHER" id="PTHR43798:SF31">
    <property type="entry name" value="AB HYDROLASE SUPERFAMILY PROTEIN YCLE"/>
    <property type="match status" value="1"/>
</dbReference>
<dbReference type="PANTHER" id="PTHR43798">
    <property type="entry name" value="MONOACYLGLYCEROL LIPASE"/>
    <property type="match status" value="1"/>
</dbReference>
<dbReference type="Pfam" id="PF00561">
    <property type="entry name" value="Abhydrolase_1"/>
    <property type="match status" value="1"/>
</dbReference>
<dbReference type="Pfam" id="PF08241">
    <property type="entry name" value="Methyltransf_11"/>
    <property type="match status" value="1"/>
</dbReference>
<dbReference type="SUPFAM" id="SSF53474">
    <property type="entry name" value="alpha/beta-Hydrolases"/>
    <property type="match status" value="1"/>
</dbReference>
<dbReference type="SUPFAM" id="SSF53335">
    <property type="entry name" value="S-adenosyl-L-methionine-dependent methyltransferases"/>
    <property type="match status" value="1"/>
</dbReference>
<feature type="chain" id="PRO_0000412489" description="Biotin biosynthesis bifunctional protein BioHC">
    <location>
        <begin position="1"/>
        <end position="502"/>
    </location>
</feature>
<feature type="region of interest" description="Carboxylesterase">
    <location>
        <begin position="1"/>
        <end position="224"/>
    </location>
</feature>
<feature type="region of interest" description="Malonyl-ACP O-methyltransferase">
    <location>
        <begin position="225"/>
        <end position="502"/>
    </location>
</feature>
<feature type="active site" description="Nucleophile" evidence="1">
    <location>
        <position position="72"/>
    </location>
</feature>
<feature type="active site" evidence="1">
    <location>
        <position position="195"/>
    </location>
</feature>
<feature type="active site" evidence="1">
    <location>
        <position position="223"/>
    </location>
</feature>
<feature type="binding site" evidence="1">
    <location>
        <position position="12"/>
    </location>
    <ligand>
        <name>substrate</name>
    </ligand>
</feature>
<feature type="binding site" evidence="1">
    <location>
        <begin position="134"/>
        <end position="138"/>
    </location>
    <ligand>
        <name>substrate</name>
    </ligand>
</feature>
<feature type="binding site" evidence="1">
    <location>
        <position position="223"/>
    </location>
    <ligand>
        <name>substrate</name>
    </ligand>
</feature>
<organism>
    <name type="scientific">Cellvibrio japonicus (strain Ueda107)</name>
    <name type="common">Pseudomonas fluorescens subsp. cellulosa</name>
    <dbReference type="NCBI Taxonomy" id="498211"/>
    <lineage>
        <taxon>Bacteria</taxon>
        <taxon>Pseudomonadati</taxon>
        <taxon>Pseudomonadota</taxon>
        <taxon>Gammaproteobacteria</taxon>
        <taxon>Cellvibrionales</taxon>
        <taxon>Cellvibrionaceae</taxon>
        <taxon>Cellvibrio</taxon>
    </lineage>
</organism>
<evidence type="ECO:0000250" key="1"/>
<evidence type="ECO:0000305" key="2"/>
<sequence>MTRPVLVLVHGWGCDSRTWQPVLDGLRELVPVQLVDLPGFGNTPALETFSLPAVLAAIESQLPERCVLLGWSLGAMLAVQLAARLPQQVLGVISLAANARFVASDDYPHAMAPDVNRQFNSRFAEQPQAALKMFTGLLAQGDVQERALLKQLRTQVPDAINHNWAQALQLLAELDNRAALVQLSQPLLHLLAEQDALVPIAAAESLRGLNSQHQIHVIAGSAHAVHWSQPQQLISAVQDFYETLATAVDKKRVAQSFGKAAATYDSVAGLQRAVGAQLLDYLPAQLDRTRLLDIGSGTGFFTAQLATRGAEVIALDIAQGMLDFARQQHPQAADWVCGDAENLPFAQSSVDFIFSSLVIQWCARVPQLMQELARVLKPGGRAYISTLGPGTLVELKRAWQQVDNYVHVNRFVGRTSLEQAVQQAGMQCLAFVESTRRLYFSRLRDLTHELKALGAHNINPGQAQGLTGRQRLQAFSLAYERERSPQGLPASYEVYYLVLCKP</sequence>
<proteinExistence type="inferred from homology"/>
<name>BIOHC_CELJU</name>
<protein>
    <recommendedName>
        <fullName>Biotin biosynthesis bifunctional protein BioHC</fullName>
    </recommendedName>
    <domain>
        <recommendedName>
            <fullName>Carboxylesterase BioH</fullName>
            <ecNumber>3.1.1.1</ecNumber>
        </recommendedName>
        <alternativeName>
            <fullName>Biotin synthesis protein BioH</fullName>
        </alternativeName>
    </domain>
    <domain>
        <recommendedName>
            <fullName>Malonyl-[acyl-carrier protein] O-methyltransferase</fullName>
            <shortName>Malonyl-ACP O-methyltransferase</shortName>
            <ecNumber>2.1.1.197</ecNumber>
        </recommendedName>
        <alternativeName>
            <fullName>Biotin synthesis protein BioC</fullName>
        </alternativeName>
    </domain>
</protein>
<accession>B3PI89</accession>